<feature type="chain" id="PRO_1000133293" description="RNA chaperone ProQ">
    <location>
        <begin position="1"/>
        <end position="232"/>
    </location>
</feature>
<feature type="region of interest" description="Disordered" evidence="2">
    <location>
        <begin position="105"/>
        <end position="182"/>
    </location>
</feature>
<feature type="compositionally biased region" description="Basic and acidic residues" evidence="2">
    <location>
        <begin position="117"/>
        <end position="136"/>
    </location>
</feature>
<feature type="compositionally biased region" description="Basic residues" evidence="2">
    <location>
        <begin position="137"/>
        <end position="146"/>
    </location>
</feature>
<feature type="compositionally biased region" description="Basic and acidic residues" evidence="2">
    <location>
        <begin position="147"/>
        <end position="177"/>
    </location>
</feature>
<sequence>MENQPKLNSSKEVIAFLAERFPHCFSAEGEARPLKIGIFQDLVDRVAGEMNLSKTQLRSALRLYTSSWRYLYGVKPGATRVDLDGNPCGELDEQHVEHARKQLEEAKARVQAQRAEQQAKKREAAATAGEKEDAPRRERKPRPTTPRRKEGAERKPRAQKPVEKAPKTVKAPREEQHTPVSDISALTVGQALKVKAGQNAMDATVLEITKDGVRVQLNSGMSLIVRAEHLVF</sequence>
<reference key="1">
    <citation type="journal article" date="2008" name="J. Bacteriol.">
        <title>The complete genome sequence of Escherichia coli DH10B: insights into the biology of a laboratory workhorse.</title>
        <authorList>
            <person name="Durfee T."/>
            <person name="Nelson R."/>
            <person name="Baldwin S."/>
            <person name="Plunkett G. III"/>
            <person name="Burland V."/>
            <person name="Mau B."/>
            <person name="Petrosino J.F."/>
            <person name="Qin X."/>
            <person name="Muzny D.M."/>
            <person name="Ayele M."/>
            <person name="Gibbs R.A."/>
            <person name="Csorgo B."/>
            <person name="Posfai G."/>
            <person name="Weinstock G.M."/>
            <person name="Blattner F.R."/>
        </authorList>
    </citation>
    <scope>NUCLEOTIDE SEQUENCE [LARGE SCALE GENOMIC DNA]</scope>
    <source>
        <strain>K12 / DH10B</strain>
    </source>
</reference>
<dbReference type="EMBL" id="CP000948">
    <property type="protein sequence ID" value="ACB03029.1"/>
    <property type="molecule type" value="Genomic_DNA"/>
</dbReference>
<dbReference type="RefSeq" id="WP_000431381.1">
    <property type="nucleotide sequence ID" value="NC_010473.1"/>
</dbReference>
<dbReference type="SMR" id="B1XH99"/>
<dbReference type="KEGG" id="ecd:ECDH10B_1970"/>
<dbReference type="HOGENOM" id="CLU_113254_0_0_6"/>
<dbReference type="GO" id="GO:0005829">
    <property type="term" value="C:cytosol"/>
    <property type="evidence" value="ECO:0007669"/>
    <property type="project" value="TreeGrafter"/>
</dbReference>
<dbReference type="GO" id="GO:0033592">
    <property type="term" value="F:RNA strand annealing activity"/>
    <property type="evidence" value="ECO:0007669"/>
    <property type="project" value="UniProtKB-UniRule"/>
</dbReference>
<dbReference type="GO" id="GO:0034057">
    <property type="term" value="F:RNA strand-exchange activity"/>
    <property type="evidence" value="ECO:0007669"/>
    <property type="project" value="UniProtKB-UniRule"/>
</dbReference>
<dbReference type="GO" id="GO:0010608">
    <property type="term" value="P:post-transcriptional regulation of gene expression"/>
    <property type="evidence" value="ECO:0007669"/>
    <property type="project" value="InterPro"/>
</dbReference>
<dbReference type="FunFam" id="1.10.1710.10:FF:000001">
    <property type="entry name" value="RNA chaperone ProQ"/>
    <property type="match status" value="1"/>
</dbReference>
<dbReference type="Gene3D" id="1.10.1710.10">
    <property type="entry name" value="ProQ/FinO domain"/>
    <property type="match status" value="1"/>
</dbReference>
<dbReference type="HAMAP" id="MF_00749">
    <property type="entry name" value="ProQ"/>
    <property type="match status" value="1"/>
</dbReference>
<dbReference type="InterPro" id="IPR023529">
    <property type="entry name" value="ProQ"/>
</dbReference>
<dbReference type="InterPro" id="IPR016103">
    <property type="entry name" value="ProQ/FinO"/>
</dbReference>
<dbReference type="InterPro" id="IPR036442">
    <property type="entry name" value="ProQ/FinO_sf"/>
</dbReference>
<dbReference type="InterPro" id="IPR035236">
    <property type="entry name" value="ProQ_C"/>
</dbReference>
<dbReference type="NCBIfam" id="NF003434">
    <property type="entry name" value="PRK04950.1"/>
    <property type="match status" value="1"/>
</dbReference>
<dbReference type="PANTHER" id="PTHR38106">
    <property type="entry name" value="RNA CHAPERONE PROQ"/>
    <property type="match status" value="1"/>
</dbReference>
<dbReference type="PANTHER" id="PTHR38106:SF1">
    <property type="entry name" value="RNA CHAPERONE PROQ"/>
    <property type="match status" value="1"/>
</dbReference>
<dbReference type="Pfam" id="PF04352">
    <property type="entry name" value="ProQ"/>
    <property type="match status" value="1"/>
</dbReference>
<dbReference type="Pfam" id="PF17516">
    <property type="entry name" value="ProQ_C"/>
    <property type="match status" value="1"/>
</dbReference>
<dbReference type="SMART" id="SM00945">
    <property type="entry name" value="ProQ"/>
    <property type="match status" value="1"/>
</dbReference>
<dbReference type="SUPFAM" id="SSF48657">
    <property type="entry name" value="FinO-like"/>
    <property type="match status" value="1"/>
</dbReference>
<keyword id="KW-0143">Chaperone</keyword>
<keyword id="KW-0963">Cytoplasm</keyword>
<keyword id="KW-0694">RNA-binding</keyword>
<comment type="function">
    <text evidence="1">RNA chaperone with significant RNA binding, RNA strand exchange and RNA duplexing activities. May regulate ProP activity through an RNA-based, post-transcriptional mechanism.</text>
</comment>
<comment type="subcellular location">
    <subcellularLocation>
        <location evidence="1">Cytoplasm</location>
    </subcellularLocation>
</comment>
<comment type="similarity">
    <text evidence="1">Belongs to the ProQ family.</text>
</comment>
<name>PROQ_ECODH</name>
<protein>
    <recommendedName>
        <fullName evidence="1">RNA chaperone ProQ</fullName>
    </recommendedName>
</protein>
<evidence type="ECO:0000255" key="1">
    <source>
        <dbReference type="HAMAP-Rule" id="MF_00749"/>
    </source>
</evidence>
<evidence type="ECO:0000256" key="2">
    <source>
        <dbReference type="SAM" id="MobiDB-lite"/>
    </source>
</evidence>
<gene>
    <name evidence="1" type="primary">proQ</name>
    <name type="ordered locus">ECDH10B_1970</name>
</gene>
<proteinExistence type="inferred from homology"/>
<accession>B1XH99</accession>
<organism>
    <name type="scientific">Escherichia coli (strain K12 / DH10B)</name>
    <dbReference type="NCBI Taxonomy" id="316385"/>
    <lineage>
        <taxon>Bacteria</taxon>
        <taxon>Pseudomonadati</taxon>
        <taxon>Pseudomonadota</taxon>
        <taxon>Gammaproteobacteria</taxon>
        <taxon>Enterobacterales</taxon>
        <taxon>Enterobacteriaceae</taxon>
        <taxon>Escherichia</taxon>
    </lineage>
</organism>